<proteinExistence type="evidence at protein level"/>
<feature type="initiator methionine" description="Removed" evidence="2">
    <location>
        <position position="1"/>
    </location>
</feature>
<feature type="chain" id="PRO_0000324816" description="Histone-like protein Hq1">
    <location>
        <begin position="2"/>
        <end position="117"/>
    </location>
</feature>
<feature type="region of interest" description="Disordered" evidence="1">
    <location>
        <begin position="1"/>
        <end position="117"/>
    </location>
</feature>
<feature type="compositionally biased region" description="Basic residues" evidence="1">
    <location>
        <begin position="1"/>
        <end position="17"/>
    </location>
</feature>
<feature type="compositionally biased region" description="Basic residues" evidence="1">
    <location>
        <begin position="39"/>
        <end position="50"/>
    </location>
</feature>
<feature type="compositionally biased region" description="Basic and acidic residues" evidence="1">
    <location>
        <begin position="51"/>
        <end position="68"/>
    </location>
</feature>
<feature type="compositionally biased region" description="Basic residues" evidence="1">
    <location>
        <begin position="71"/>
        <end position="117"/>
    </location>
</feature>
<name>HQ1_COXBU</name>
<reference key="1">
    <citation type="journal article" date="1996" name="J. Bacteriol.">
        <title>A developmental stage-specific histone H1 homolog of Coxiella burnetii.</title>
        <authorList>
            <person name="Heinzen R.A."/>
            <person name="Hackstadt T."/>
        </authorList>
    </citation>
    <scope>NUCLEOTIDE SEQUENCE [GENOMIC DNA]</scope>
    <scope>PROTEIN SEQUENCE OF 2-26</scope>
    <scope>DEVELOPMENTAL STAGE</scope>
    <source>
        <strain>Nine Mile phase I</strain>
    </source>
</reference>
<reference key="2">
    <citation type="journal article" date="2003" name="Proc. Natl. Acad. Sci. U.S.A.">
        <title>Complete genome sequence of the Q-fever pathogen, Coxiella burnetii.</title>
        <authorList>
            <person name="Seshadri R."/>
            <person name="Paulsen I.T."/>
            <person name="Eisen J.A."/>
            <person name="Read T.D."/>
            <person name="Nelson K.E."/>
            <person name="Nelson W.C."/>
            <person name="Ward N.L."/>
            <person name="Tettelin H."/>
            <person name="Davidsen T.M."/>
            <person name="Beanan M.J."/>
            <person name="DeBoy R.T."/>
            <person name="Daugherty S.C."/>
            <person name="Brinkac L.M."/>
            <person name="Madupu R."/>
            <person name="Dodson R.J."/>
            <person name="Khouri H.M."/>
            <person name="Lee K.H."/>
            <person name="Carty H.A."/>
            <person name="Scanlan D."/>
            <person name="Heinzen R.A."/>
            <person name="Thompson H.A."/>
            <person name="Samuel J.E."/>
            <person name="Fraser C.M."/>
            <person name="Heidelberg J.F."/>
        </authorList>
    </citation>
    <scope>NUCLEOTIDE SEQUENCE [LARGE SCALE GENOMIC DNA]</scope>
    <source>
        <strain>RSA 493 / Nine Mile phase I</strain>
    </source>
</reference>
<protein>
    <recommendedName>
        <fullName>Histone-like protein Hq1</fullName>
    </recommendedName>
    <alternativeName>
        <fullName>Putative DNA-binding protein</fullName>
    </alternativeName>
</protein>
<organism>
    <name type="scientific">Coxiella burnetii (strain RSA 493 / Nine Mile phase I)</name>
    <dbReference type="NCBI Taxonomy" id="227377"/>
    <lineage>
        <taxon>Bacteria</taxon>
        <taxon>Pseudomonadati</taxon>
        <taxon>Pseudomonadota</taxon>
        <taxon>Gammaproteobacteria</taxon>
        <taxon>Legionellales</taxon>
        <taxon>Coxiellaceae</taxon>
        <taxon>Coxiella</taxon>
    </lineage>
</organism>
<dbReference type="EMBL" id="L79945">
    <property type="protein sequence ID" value="AAB36614.1"/>
    <property type="molecule type" value="Genomic_DNA"/>
</dbReference>
<dbReference type="EMBL" id="AE016828">
    <property type="protein sequence ID" value="AAO90006.1"/>
    <property type="molecule type" value="Genomic_DNA"/>
</dbReference>
<dbReference type="RefSeq" id="NP_819492.1">
    <property type="nucleotide sequence ID" value="NC_002971.3"/>
</dbReference>
<dbReference type="RefSeq" id="WP_010957589.1">
    <property type="nucleotide sequence ID" value="NZ_CCYB01000054.1"/>
</dbReference>
<dbReference type="SMR" id="Q45881"/>
<dbReference type="EnsemblBacteria" id="AAO90006">
    <property type="protein sequence ID" value="AAO90006"/>
    <property type="gene ID" value="CBU_0456"/>
</dbReference>
<dbReference type="GeneID" id="1208340"/>
<dbReference type="KEGG" id="cbu:CBU_0456"/>
<dbReference type="PATRIC" id="fig|227377.7.peg.447"/>
<dbReference type="HOGENOM" id="CLU_2080857_0_0_6"/>
<dbReference type="Proteomes" id="UP000002671">
    <property type="component" value="Chromosome"/>
</dbReference>
<dbReference type="GO" id="GO:0003677">
    <property type="term" value="F:DNA binding"/>
    <property type="evidence" value="ECO:0007669"/>
    <property type="project" value="UniProtKB-KW"/>
</dbReference>
<keyword id="KW-0903">Direct protein sequencing</keyword>
<keyword id="KW-0238">DNA-binding</keyword>
<keyword id="KW-1185">Reference proteome</keyword>
<evidence type="ECO:0000256" key="1">
    <source>
        <dbReference type="SAM" id="MobiDB-lite"/>
    </source>
</evidence>
<evidence type="ECO:0000269" key="2">
    <source>
    </source>
</evidence>
<gene>
    <name type="primary">hcbA</name>
    <name type="ordered locus">CBU_0456</name>
</gene>
<accession>Q45881</accession>
<accession>Q7C3I9</accession>
<sequence>MPAKKRKTTRQRRRSKARSASANTAALRKVSKERDQARRKLRAAQKKLAKAKKDASRKLAKLRKEAARKVAAAKKTRAPSKKGRKKATRKKGGGRSRKTARKVSTMKRGRGRPRKKA</sequence>
<comment type="function">
    <text>Binds DNA in vitro.</text>
</comment>
<comment type="developmental stage">
    <text evidence="2">Much more abundant in the small cell variant (SCV) stage than in the large cell variant (LCV) stage (at protein level). LCVs are more metabolically active than SCVs.</text>
</comment>